<keyword id="KW-0997">Cell inner membrane</keyword>
<keyword id="KW-1003">Cell membrane</keyword>
<keyword id="KW-0472">Membrane</keyword>
<keyword id="KW-0520">NAD</keyword>
<keyword id="KW-0874">Quinone</keyword>
<keyword id="KW-1278">Translocase</keyword>
<keyword id="KW-0812">Transmembrane</keyword>
<keyword id="KW-1133">Transmembrane helix</keyword>
<keyword id="KW-0830">Ubiquinone</keyword>
<sequence>MESAFIIEKSVVIVVVFAVTMIMAMYSTWAERKVAAFLQDRVGPNRAGWGGLLQPLADGMKLFSKEEFFPNTPNRFLFVVGPAIAMSTALMTSAVIPWGDRLHLFGKDIILQATDVNIALLYIFGVLSVGVYGIMIGGWASNNKFSLMGAVRAASQMVSYEIAMGLSMIALLMMTGTMSLKVISEQQAGMNWNVFYQPLSFLIFLICSFAETNRTPFDLAECENELIGGYHTEYSSMKMGFYLFAEYASMFISSTIISVLFFGGYNYPGMQWMVDNVGVNTANLLGIAVLFVKICFFIFFYMWVRWTIPRFRYDQLMNLGWRILIPLSIINIMITGAVILRHDIAAALGF</sequence>
<protein>
    <recommendedName>
        <fullName evidence="1">NADH-quinone oxidoreductase subunit H</fullName>
        <ecNumber evidence="1">7.1.1.-</ecNumber>
    </recommendedName>
    <alternativeName>
        <fullName evidence="1">NADH dehydrogenase I subunit H</fullName>
    </alternativeName>
    <alternativeName>
        <fullName evidence="1">NDH-1 subunit H</fullName>
    </alternativeName>
</protein>
<feature type="chain" id="PRO_1000086941" description="NADH-quinone oxidoreductase subunit H">
    <location>
        <begin position="1"/>
        <end position="350"/>
    </location>
</feature>
<feature type="transmembrane region" description="Helical" evidence="1">
    <location>
        <begin position="5"/>
        <end position="25"/>
    </location>
</feature>
<feature type="transmembrane region" description="Helical" evidence="1">
    <location>
        <begin position="76"/>
        <end position="96"/>
    </location>
</feature>
<feature type="transmembrane region" description="Helical" evidence="1">
    <location>
        <begin position="118"/>
        <end position="138"/>
    </location>
</feature>
<feature type="transmembrane region" description="Helical" evidence="1">
    <location>
        <begin position="162"/>
        <end position="182"/>
    </location>
</feature>
<feature type="transmembrane region" description="Helical" evidence="1">
    <location>
        <begin position="190"/>
        <end position="210"/>
    </location>
</feature>
<feature type="transmembrane region" description="Helical" evidence="1">
    <location>
        <begin position="243"/>
        <end position="263"/>
    </location>
</feature>
<feature type="transmembrane region" description="Helical" evidence="1">
    <location>
        <begin position="284"/>
        <end position="304"/>
    </location>
</feature>
<feature type="transmembrane region" description="Helical" evidence="1">
    <location>
        <begin position="319"/>
        <end position="339"/>
    </location>
</feature>
<reference key="1">
    <citation type="journal article" date="2009" name="Appl. Environ. Microbiol.">
        <title>Novel features of the polysaccharide-digesting gliding bacterium Flavobacterium johnsoniae as revealed by genome sequence analysis.</title>
        <authorList>
            <person name="McBride M.J."/>
            <person name="Xie G."/>
            <person name="Martens E.C."/>
            <person name="Lapidus A."/>
            <person name="Henrissat B."/>
            <person name="Rhodes R.G."/>
            <person name="Goltsman E."/>
            <person name="Wang W."/>
            <person name="Xu J."/>
            <person name="Hunnicutt D.W."/>
            <person name="Staroscik A.M."/>
            <person name="Hoover T.R."/>
            <person name="Cheng Y.Q."/>
            <person name="Stein J.L."/>
        </authorList>
    </citation>
    <scope>NUCLEOTIDE SEQUENCE [LARGE SCALE GENOMIC DNA]</scope>
    <source>
        <strain>ATCC 17061 / DSM 2064 / JCM 8514 / BCRC 14874 / CCUG 350202 / NBRC 14942 / NCIMB 11054 / UW101</strain>
    </source>
</reference>
<accession>A5FKK0</accession>
<organism>
    <name type="scientific">Flavobacterium johnsoniae (strain ATCC 17061 / DSM 2064 / JCM 8514 / BCRC 14874 / CCUG 350202 / NBRC 14942 / NCIMB 11054 / UW101)</name>
    <name type="common">Cytophaga johnsonae</name>
    <dbReference type="NCBI Taxonomy" id="376686"/>
    <lineage>
        <taxon>Bacteria</taxon>
        <taxon>Pseudomonadati</taxon>
        <taxon>Bacteroidota</taxon>
        <taxon>Flavobacteriia</taxon>
        <taxon>Flavobacteriales</taxon>
        <taxon>Flavobacteriaceae</taxon>
        <taxon>Flavobacterium</taxon>
    </lineage>
</organism>
<comment type="function">
    <text evidence="1">NDH-1 shuttles electrons from NADH, via FMN and iron-sulfur (Fe-S) centers, to quinones in the respiratory chain. The immediate electron acceptor for the enzyme in this species is believed to be ubiquinone. Couples the redox reaction to proton translocation (for every two electrons transferred, four hydrogen ions are translocated across the cytoplasmic membrane), and thus conserves the redox energy in a proton gradient. This subunit may bind ubiquinone.</text>
</comment>
<comment type="catalytic activity">
    <reaction evidence="1">
        <text>a quinone + NADH + 5 H(+)(in) = a quinol + NAD(+) + 4 H(+)(out)</text>
        <dbReference type="Rhea" id="RHEA:57888"/>
        <dbReference type="ChEBI" id="CHEBI:15378"/>
        <dbReference type="ChEBI" id="CHEBI:24646"/>
        <dbReference type="ChEBI" id="CHEBI:57540"/>
        <dbReference type="ChEBI" id="CHEBI:57945"/>
        <dbReference type="ChEBI" id="CHEBI:132124"/>
    </reaction>
</comment>
<comment type="subunit">
    <text evidence="1">NDH-1 is composed of 14 different subunits. Subunits NuoA, H, J, K, L, M, N constitute the membrane sector of the complex.</text>
</comment>
<comment type="subcellular location">
    <subcellularLocation>
        <location evidence="1">Cell inner membrane</location>
        <topology evidence="1">Multi-pass membrane protein</topology>
    </subcellularLocation>
</comment>
<comment type="similarity">
    <text evidence="1">Belongs to the complex I subunit 1 family.</text>
</comment>
<evidence type="ECO:0000255" key="1">
    <source>
        <dbReference type="HAMAP-Rule" id="MF_01350"/>
    </source>
</evidence>
<name>NUOH_FLAJ1</name>
<proteinExistence type="inferred from homology"/>
<dbReference type="EC" id="7.1.1.-" evidence="1"/>
<dbReference type="EMBL" id="CP000685">
    <property type="protein sequence ID" value="ABQ04271.1"/>
    <property type="molecule type" value="Genomic_DNA"/>
</dbReference>
<dbReference type="RefSeq" id="WP_012023321.1">
    <property type="nucleotide sequence ID" value="NC_009441.1"/>
</dbReference>
<dbReference type="SMR" id="A5FKK0"/>
<dbReference type="STRING" id="376686.Fjoh_1239"/>
<dbReference type="KEGG" id="fjo:Fjoh_1239"/>
<dbReference type="eggNOG" id="COG1005">
    <property type="taxonomic scope" value="Bacteria"/>
</dbReference>
<dbReference type="HOGENOM" id="CLU_015134_0_1_10"/>
<dbReference type="OrthoDB" id="9803734at2"/>
<dbReference type="Proteomes" id="UP000006694">
    <property type="component" value="Chromosome"/>
</dbReference>
<dbReference type="GO" id="GO:0005886">
    <property type="term" value="C:plasma membrane"/>
    <property type="evidence" value="ECO:0007669"/>
    <property type="project" value="UniProtKB-SubCell"/>
</dbReference>
<dbReference type="GO" id="GO:0003954">
    <property type="term" value="F:NADH dehydrogenase activity"/>
    <property type="evidence" value="ECO:0007669"/>
    <property type="project" value="TreeGrafter"/>
</dbReference>
<dbReference type="GO" id="GO:0016655">
    <property type="term" value="F:oxidoreductase activity, acting on NAD(P)H, quinone or similar compound as acceptor"/>
    <property type="evidence" value="ECO:0007669"/>
    <property type="project" value="UniProtKB-UniRule"/>
</dbReference>
<dbReference type="GO" id="GO:0048038">
    <property type="term" value="F:quinone binding"/>
    <property type="evidence" value="ECO:0007669"/>
    <property type="project" value="UniProtKB-KW"/>
</dbReference>
<dbReference type="GO" id="GO:0009060">
    <property type="term" value="P:aerobic respiration"/>
    <property type="evidence" value="ECO:0007669"/>
    <property type="project" value="TreeGrafter"/>
</dbReference>
<dbReference type="HAMAP" id="MF_01350">
    <property type="entry name" value="NDH1_NuoH"/>
    <property type="match status" value="1"/>
</dbReference>
<dbReference type="InterPro" id="IPR001694">
    <property type="entry name" value="NADH_UbQ_OxRdtase_su1/FPO"/>
</dbReference>
<dbReference type="InterPro" id="IPR018086">
    <property type="entry name" value="NADH_UbQ_OxRdtase_su1_CS"/>
</dbReference>
<dbReference type="NCBIfam" id="NF004741">
    <property type="entry name" value="PRK06076.1-2"/>
    <property type="match status" value="1"/>
</dbReference>
<dbReference type="PANTHER" id="PTHR11432">
    <property type="entry name" value="NADH DEHYDROGENASE SUBUNIT 1"/>
    <property type="match status" value="1"/>
</dbReference>
<dbReference type="PANTHER" id="PTHR11432:SF3">
    <property type="entry name" value="NADH-UBIQUINONE OXIDOREDUCTASE CHAIN 1"/>
    <property type="match status" value="1"/>
</dbReference>
<dbReference type="Pfam" id="PF00146">
    <property type="entry name" value="NADHdh"/>
    <property type="match status" value="1"/>
</dbReference>
<dbReference type="PROSITE" id="PS00667">
    <property type="entry name" value="COMPLEX1_ND1_1"/>
    <property type="match status" value="1"/>
</dbReference>
<dbReference type="PROSITE" id="PS00668">
    <property type="entry name" value="COMPLEX1_ND1_2"/>
    <property type="match status" value="1"/>
</dbReference>
<gene>
    <name evidence="1" type="primary">nuoH</name>
    <name type="ordered locus">Fjoh_1239</name>
</gene>